<accession>Q39JY0</accession>
<comment type="function">
    <text evidence="1">Catalyzes the hydroxylation of 2-nonaprenyl-3-methyl-6-methoxy-1,4-benzoquinol during ubiquinone biosynthesis.</text>
</comment>
<comment type="catalytic activity">
    <reaction evidence="1">
        <text>a 5-methoxy-2-methyl-3-(all-trans-polyprenyl)benzene-1,4-diol + AH2 + O2 = a 3-demethylubiquinol + A + H2O</text>
        <dbReference type="Rhea" id="RHEA:50908"/>
        <dbReference type="Rhea" id="RHEA-COMP:10859"/>
        <dbReference type="Rhea" id="RHEA-COMP:10914"/>
        <dbReference type="ChEBI" id="CHEBI:13193"/>
        <dbReference type="ChEBI" id="CHEBI:15377"/>
        <dbReference type="ChEBI" id="CHEBI:15379"/>
        <dbReference type="ChEBI" id="CHEBI:17499"/>
        <dbReference type="ChEBI" id="CHEBI:84167"/>
        <dbReference type="ChEBI" id="CHEBI:84422"/>
        <dbReference type="EC" id="1.14.99.60"/>
    </reaction>
</comment>
<comment type="cofactor">
    <cofactor evidence="1">
        <name>Fe cation</name>
        <dbReference type="ChEBI" id="CHEBI:24875"/>
    </cofactor>
    <text evidence="1">Binds 2 iron ions per subunit.</text>
</comment>
<comment type="pathway">
    <text evidence="1">Cofactor biosynthesis; ubiquinone biosynthesis.</text>
</comment>
<comment type="subcellular location">
    <subcellularLocation>
        <location evidence="1">Cell membrane</location>
        <topology evidence="1">Peripheral membrane protein</topology>
    </subcellularLocation>
</comment>
<comment type="similarity">
    <text evidence="1">Belongs to the COQ7 family.</text>
</comment>
<reference key="1">
    <citation type="submission" date="2005-10" db="EMBL/GenBank/DDBJ databases">
        <title>Complete sequence of chromosome 1 of Burkholderia sp. 383.</title>
        <authorList>
            <consortium name="US DOE Joint Genome Institute"/>
            <person name="Copeland A."/>
            <person name="Lucas S."/>
            <person name="Lapidus A."/>
            <person name="Barry K."/>
            <person name="Detter J.C."/>
            <person name="Glavina T."/>
            <person name="Hammon N."/>
            <person name="Israni S."/>
            <person name="Pitluck S."/>
            <person name="Chain P."/>
            <person name="Malfatti S."/>
            <person name="Shin M."/>
            <person name="Vergez L."/>
            <person name="Schmutz J."/>
            <person name="Larimer F."/>
            <person name="Land M."/>
            <person name="Kyrpides N."/>
            <person name="Lykidis A."/>
            <person name="Richardson P."/>
        </authorList>
    </citation>
    <scope>NUCLEOTIDE SEQUENCE [LARGE SCALE GENOMIC DNA]</scope>
    <source>
        <strain>ATCC 17760 / DSM 23089 / LMG 22485 / NCIMB 9086 / R18194 / 383</strain>
    </source>
</reference>
<keyword id="KW-1003">Cell membrane</keyword>
<keyword id="KW-0408">Iron</keyword>
<keyword id="KW-0472">Membrane</keyword>
<keyword id="KW-0479">Metal-binding</keyword>
<keyword id="KW-0503">Monooxygenase</keyword>
<keyword id="KW-0560">Oxidoreductase</keyword>
<keyword id="KW-0831">Ubiquinone biosynthesis</keyword>
<organism>
    <name type="scientific">Burkholderia lata (strain ATCC 17760 / DSM 23089 / LMG 22485 / NCIMB 9086 / R18194 / 383)</name>
    <dbReference type="NCBI Taxonomy" id="482957"/>
    <lineage>
        <taxon>Bacteria</taxon>
        <taxon>Pseudomonadati</taxon>
        <taxon>Pseudomonadota</taxon>
        <taxon>Betaproteobacteria</taxon>
        <taxon>Burkholderiales</taxon>
        <taxon>Burkholderiaceae</taxon>
        <taxon>Burkholderia</taxon>
        <taxon>Burkholderia cepacia complex</taxon>
    </lineage>
</organism>
<sequence>MVFDELISEFDRGLRSLTGISRMSRPVPAPAEAPAAELTPAERTHAAGLMRVNHVGEVCAQALYQAQKLTARTASAKAMFEEAAREEEDHLAWTAHRLKELDSRPSLLNPLWYAGSLAIGVAAGALGDKVSLGFMAETERQVESHLEGHMSELPAADTASRAIVDQMRIDEVKHGKAAADAGGIELPLPARMLMRAASKVMTSTAYYL</sequence>
<proteinExistence type="inferred from homology"/>
<dbReference type="EC" id="1.14.99.60" evidence="1"/>
<dbReference type="EMBL" id="CP000151">
    <property type="protein sequence ID" value="ABB07236.1"/>
    <property type="molecule type" value="Genomic_DNA"/>
</dbReference>
<dbReference type="RefSeq" id="WP_011350831.1">
    <property type="nucleotide sequence ID" value="NC_007510.1"/>
</dbReference>
<dbReference type="SMR" id="Q39JY0"/>
<dbReference type="GeneID" id="45093549"/>
<dbReference type="KEGG" id="bur:Bcep18194_A3635"/>
<dbReference type="PATRIC" id="fig|482957.22.peg.489"/>
<dbReference type="HOGENOM" id="CLU_088601_0_0_4"/>
<dbReference type="UniPathway" id="UPA00232"/>
<dbReference type="Proteomes" id="UP000002705">
    <property type="component" value="Chromosome 1"/>
</dbReference>
<dbReference type="GO" id="GO:0005886">
    <property type="term" value="C:plasma membrane"/>
    <property type="evidence" value="ECO:0007669"/>
    <property type="project" value="UniProtKB-SubCell"/>
</dbReference>
<dbReference type="GO" id="GO:0008682">
    <property type="term" value="F:3-demethoxyubiquinol 3-hydroxylase activity"/>
    <property type="evidence" value="ECO:0007669"/>
    <property type="project" value="UniProtKB-EC"/>
</dbReference>
<dbReference type="GO" id="GO:0046872">
    <property type="term" value="F:metal ion binding"/>
    <property type="evidence" value="ECO:0007669"/>
    <property type="project" value="UniProtKB-KW"/>
</dbReference>
<dbReference type="GO" id="GO:0006744">
    <property type="term" value="P:ubiquinone biosynthetic process"/>
    <property type="evidence" value="ECO:0007669"/>
    <property type="project" value="UniProtKB-UniRule"/>
</dbReference>
<dbReference type="CDD" id="cd01042">
    <property type="entry name" value="DMQH"/>
    <property type="match status" value="1"/>
</dbReference>
<dbReference type="Gene3D" id="1.20.1260.10">
    <property type="match status" value="1"/>
</dbReference>
<dbReference type="HAMAP" id="MF_01658">
    <property type="entry name" value="COQ7"/>
    <property type="match status" value="1"/>
</dbReference>
<dbReference type="InterPro" id="IPR047809">
    <property type="entry name" value="COQ7_proteobact"/>
</dbReference>
<dbReference type="InterPro" id="IPR012347">
    <property type="entry name" value="Ferritin-like"/>
</dbReference>
<dbReference type="InterPro" id="IPR009078">
    <property type="entry name" value="Ferritin-like_SF"/>
</dbReference>
<dbReference type="InterPro" id="IPR011566">
    <property type="entry name" value="Ubq_synth_Coq7"/>
</dbReference>
<dbReference type="NCBIfam" id="NF033656">
    <property type="entry name" value="DMQ_monoox_COQ7"/>
    <property type="match status" value="1"/>
</dbReference>
<dbReference type="PANTHER" id="PTHR11237:SF4">
    <property type="entry name" value="5-DEMETHOXYUBIQUINONE HYDROXYLASE, MITOCHONDRIAL"/>
    <property type="match status" value="1"/>
</dbReference>
<dbReference type="PANTHER" id="PTHR11237">
    <property type="entry name" value="COENZYME Q10 BIOSYNTHESIS PROTEIN 7"/>
    <property type="match status" value="1"/>
</dbReference>
<dbReference type="Pfam" id="PF03232">
    <property type="entry name" value="COQ7"/>
    <property type="match status" value="1"/>
</dbReference>
<dbReference type="SUPFAM" id="SSF47240">
    <property type="entry name" value="Ferritin-like"/>
    <property type="match status" value="1"/>
</dbReference>
<protein>
    <recommendedName>
        <fullName evidence="1">3-demethoxyubiquinol 3-hydroxylase</fullName>
        <shortName evidence="1">DMQ hydroxylase</shortName>
        <ecNumber evidence="1">1.14.99.60</ecNumber>
    </recommendedName>
    <alternativeName>
        <fullName evidence="1">2-nonaprenyl-3-methyl-6-methoxy-1,4-benzoquinol hydroxylase</fullName>
    </alternativeName>
</protein>
<name>COQ7_BURL3</name>
<gene>
    <name evidence="1" type="primary">coq7</name>
    <name type="ordered locus">Bcep18194_A3635</name>
</gene>
<evidence type="ECO:0000255" key="1">
    <source>
        <dbReference type="HAMAP-Rule" id="MF_01658"/>
    </source>
</evidence>
<feature type="chain" id="PRO_0000338674" description="3-demethoxyubiquinol 3-hydroxylase">
    <location>
        <begin position="1"/>
        <end position="208"/>
    </location>
</feature>
<feature type="binding site" evidence="1">
    <location>
        <position position="57"/>
    </location>
    <ligand>
        <name>Fe cation</name>
        <dbReference type="ChEBI" id="CHEBI:24875"/>
        <label>1</label>
    </ligand>
</feature>
<feature type="binding site" evidence="1">
    <location>
        <position position="87"/>
    </location>
    <ligand>
        <name>Fe cation</name>
        <dbReference type="ChEBI" id="CHEBI:24875"/>
        <label>1</label>
    </ligand>
</feature>
<feature type="binding site" evidence="1">
    <location>
        <position position="87"/>
    </location>
    <ligand>
        <name>Fe cation</name>
        <dbReference type="ChEBI" id="CHEBI:24875"/>
        <label>2</label>
    </ligand>
</feature>
<feature type="binding site" evidence="1">
    <location>
        <position position="90"/>
    </location>
    <ligand>
        <name>Fe cation</name>
        <dbReference type="ChEBI" id="CHEBI:24875"/>
        <label>1</label>
    </ligand>
</feature>
<feature type="binding site" evidence="1">
    <location>
        <position position="139"/>
    </location>
    <ligand>
        <name>Fe cation</name>
        <dbReference type="ChEBI" id="CHEBI:24875"/>
        <label>2</label>
    </ligand>
</feature>
<feature type="binding site" evidence="1">
    <location>
        <position position="171"/>
    </location>
    <ligand>
        <name>Fe cation</name>
        <dbReference type="ChEBI" id="CHEBI:24875"/>
        <label>1</label>
    </ligand>
</feature>
<feature type="binding site" evidence="1">
    <location>
        <position position="171"/>
    </location>
    <ligand>
        <name>Fe cation</name>
        <dbReference type="ChEBI" id="CHEBI:24875"/>
        <label>2</label>
    </ligand>
</feature>
<feature type="binding site" evidence="1">
    <location>
        <position position="174"/>
    </location>
    <ligand>
        <name>Fe cation</name>
        <dbReference type="ChEBI" id="CHEBI:24875"/>
        <label>2</label>
    </ligand>
</feature>